<reference key="1">
    <citation type="journal article" date="2008" name="J. Bacteriol.">
        <title>Complete genome sequence of Neisseria gonorrhoeae NCCP11945.</title>
        <authorList>
            <person name="Chung G.T."/>
            <person name="Yoo J.S."/>
            <person name="Oh H.B."/>
            <person name="Lee Y.S."/>
            <person name="Cha S.H."/>
            <person name="Kim S.J."/>
            <person name="Yoo C.K."/>
        </authorList>
    </citation>
    <scope>NUCLEOTIDE SEQUENCE [LARGE SCALE GENOMIC DNA]</scope>
    <source>
        <strain>NCCP11945</strain>
    </source>
</reference>
<name>SMG_NEIG2</name>
<organism>
    <name type="scientific">Neisseria gonorrhoeae (strain NCCP11945)</name>
    <dbReference type="NCBI Taxonomy" id="521006"/>
    <lineage>
        <taxon>Bacteria</taxon>
        <taxon>Pseudomonadati</taxon>
        <taxon>Pseudomonadota</taxon>
        <taxon>Betaproteobacteria</taxon>
        <taxon>Neisseriales</taxon>
        <taxon>Neisseriaceae</taxon>
        <taxon>Neisseria</taxon>
    </lineage>
</organism>
<sequence length="153" mass="17047">MTEVIAYLIEHFQDFDTCPPPEDLGMLLEEAGFDTMEIGNTLMMMEVLLNSSEFSAEPAGSGALRVYSKEETDNLPQEVMGLMQYLIEEKAVSCEQREIIIHALMHIPGDEITVDTAKVLTLLLLWANKSELPVLVGDELMSALLLDNKPTMN</sequence>
<proteinExistence type="inferred from homology"/>
<dbReference type="EMBL" id="CP001050">
    <property type="protein sequence ID" value="ACF31007.1"/>
    <property type="molecule type" value="Genomic_DNA"/>
</dbReference>
<dbReference type="RefSeq" id="WP_003690120.1">
    <property type="nucleotide sequence ID" value="NC_011035.1"/>
</dbReference>
<dbReference type="SMR" id="B4RPY2"/>
<dbReference type="KEGG" id="ngk:NGK_2405"/>
<dbReference type="HOGENOM" id="CLU_133242_0_0_4"/>
<dbReference type="Proteomes" id="UP000002564">
    <property type="component" value="Chromosome"/>
</dbReference>
<dbReference type="HAMAP" id="MF_00598">
    <property type="entry name" value="Smg"/>
    <property type="match status" value="1"/>
</dbReference>
<dbReference type="InterPro" id="IPR007456">
    <property type="entry name" value="Smg"/>
</dbReference>
<dbReference type="PANTHER" id="PTHR38692">
    <property type="entry name" value="PROTEIN SMG"/>
    <property type="match status" value="1"/>
</dbReference>
<dbReference type="PANTHER" id="PTHR38692:SF1">
    <property type="entry name" value="PROTEIN SMG"/>
    <property type="match status" value="1"/>
</dbReference>
<dbReference type="Pfam" id="PF04361">
    <property type="entry name" value="DUF494"/>
    <property type="match status" value="1"/>
</dbReference>
<feature type="chain" id="PRO_1000129896" description="Protein Smg homolog">
    <location>
        <begin position="1"/>
        <end position="153"/>
    </location>
</feature>
<comment type="similarity">
    <text evidence="1">Belongs to the Smg family.</text>
</comment>
<accession>B4RPY2</accession>
<evidence type="ECO:0000255" key="1">
    <source>
        <dbReference type="HAMAP-Rule" id="MF_00598"/>
    </source>
</evidence>
<protein>
    <recommendedName>
        <fullName evidence="1">Protein Smg homolog</fullName>
    </recommendedName>
</protein>
<gene>
    <name evidence="1" type="primary">smg</name>
    <name type="ordered locus">NGK_2405</name>
</gene>